<keyword id="KW-0028">Amino-acid biosynthesis</keyword>
<keyword id="KW-0100">Branched-chain amino acid biosynthesis</keyword>
<keyword id="KW-0460">Magnesium</keyword>
<keyword id="KW-0479">Metal-binding</keyword>
<keyword id="KW-0521">NADP</keyword>
<keyword id="KW-0560">Oxidoreductase</keyword>
<keyword id="KW-1185">Reference proteome</keyword>
<organism>
    <name type="scientific">Azorhizobium caulinodans (strain ATCC 43989 / DSM 5975 / JCM 20966 / LMG 6465 / NBRC 14845 / NCIMB 13405 / ORS 571)</name>
    <dbReference type="NCBI Taxonomy" id="438753"/>
    <lineage>
        <taxon>Bacteria</taxon>
        <taxon>Pseudomonadati</taxon>
        <taxon>Pseudomonadota</taxon>
        <taxon>Alphaproteobacteria</taxon>
        <taxon>Hyphomicrobiales</taxon>
        <taxon>Xanthobacteraceae</taxon>
        <taxon>Azorhizobium</taxon>
    </lineage>
</organism>
<accession>A8I679</accession>
<name>ILVC_AZOC5</name>
<dbReference type="EC" id="1.1.1.86" evidence="1"/>
<dbReference type="EMBL" id="AP009384">
    <property type="protein sequence ID" value="BAF88372.1"/>
    <property type="molecule type" value="Genomic_DNA"/>
</dbReference>
<dbReference type="RefSeq" id="WP_012170900.1">
    <property type="nucleotide sequence ID" value="NC_009937.1"/>
</dbReference>
<dbReference type="SMR" id="A8I679"/>
<dbReference type="STRING" id="438753.AZC_2374"/>
<dbReference type="KEGG" id="azc:AZC_2374"/>
<dbReference type="eggNOG" id="COG0059">
    <property type="taxonomic scope" value="Bacteria"/>
</dbReference>
<dbReference type="HOGENOM" id="CLU_033821_0_1_5"/>
<dbReference type="UniPathway" id="UPA00047">
    <property type="reaction ID" value="UER00056"/>
</dbReference>
<dbReference type="UniPathway" id="UPA00049">
    <property type="reaction ID" value="UER00060"/>
</dbReference>
<dbReference type="Proteomes" id="UP000000270">
    <property type="component" value="Chromosome"/>
</dbReference>
<dbReference type="GO" id="GO:0005829">
    <property type="term" value="C:cytosol"/>
    <property type="evidence" value="ECO:0007669"/>
    <property type="project" value="TreeGrafter"/>
</dbReference>
<dbReference type="GO" id="GO:0004455">
    <property type="term" value="F:ketol-acid reductoisomerase activity"/>
    <property type="evidence" value="ECO:0007669"/>
    <property type="project" value="UniProtKB-UniRule"/>
</dbReference>
<dbReference type="GO" id="GO:0000287">
    <property type="term" value="F:magnesium ion binding"/>
    <property type="evidence" value="ECO:0007669"/>
    <property type="project" value="UniProtKB-UniRule"/>
</dbReference>
<dbReference type="GO" id="GO:0050661">
    <property type="term" value="F:NADP binding"/>
    <property type="evidence" value="ECO:0007669"/>
    <property type="project" value="InterPro"/>
</dbReference>
<dbReference type="GO" id="GO:0009097">
    <property type="term" value="P:isoleucine biosynthetic process"/>
    <property type="evidence" value="ECO:0007669"/>
    <property type="project" value="UniProtKB-UniRule"/>
</dbReference>
<dbReference type="GO" id="GO:0009099">
    <property type="term" value="P:L-valine biosynthetic process"/>
    <property type="evidence" value="ECO:0007669"/>
    <property type="project" value="UniProtKB-UniRule"/>
</dbReference>
<dbReference type="FunFam" id="3.40.50.720:FF:000023">
    <property type="entry name" value="Ketol-acid reductoisomerase (NADP(+))"/>
    <property type="match status" value="1"/>
</dbReference>
<dbReference type="Gene3D" id="6.10.240.10">
    <property type="match status" value="1"/>
</dbReference>
<dbReference type="Gene3D" id="3.40.50.720">
    <property type="entry name" value="NAD(P)-binding Rossmann-like Domain"/>
    <property type="match status" value="1"/>
</dbReference>
<dbReference type="HAMAP" id="MF_00435">
    <property type="entry name" value="IlvC"/>
    <property type="match status" value="1"/>
</dbReference>
<dbReference type="InterPro" id="IPR008927">
    <property type="entry name" value="6-PGluconate_DH-like_C_sf"/>
</dbReference>
<dbReference type="InterPro" id="IPR015878">
    <property type="entry name" value="Ado_hCys_hydrolase_NAD-bd"/>
</dbReference>
<dbReference type="InterPro" id="IPR013023">
    <property type="entry name" value="KARI"/>
</dbReference>
<dbReference type="InterPro" id="IPR000506">
    <property type="entry name" value="KARI_C"/>
</dbReference>
<dbReference type="InterPro" id="IPR013116">
    <property type="entry name" value="KARI_N"/>
</dbReference>
<dbReference type="InterPro" id="IPR014359">
    <property type="entry name" value="KARI_prok"/>
</dbReference>
<dbReference type="InterPro" id="IPR036291">
    <property type="entry name" value="NAD(P)-bd_dom_sf"/>
</dbReference>
<dbReference type="NCBIfam" id="TIGR00465">
    <property type="entry name" value="ilvC"/>
    <property type="match status" value="1"/>
</dbReference>
<dbReference type="NCBIfam" id="NF004017">
    <property type="entry name" value="PRK05479.1"/>
    <property type="match status" value="1"/>
</dbReference>
<dbReference type="NCBIfam" id="NF009940">
    <property type="entry name" value="PRK13403.1"/>
    <property type="match status" value="1"/>
</dbReference>
<dbReference type="PANTHER" id="PTHR21371">
    <property type="entry name" value="KETOL-ACID REDUCTOISOMERASE, MITOCHONDRIAL"/>
    <property type="match status" value="1"/>
</dbReference>
<dbReference type="PANTHER" id="PTHR21371:SF1">
    <property type="entry name" value="KETOL-ACID REDUCTOISOMERASE, MITOCHONDRIAL"/>
    <property type="match status" value="1"/>
</dbReference>
<dbReference type="Pfam" id="PF01450">
    <property type="entry name" value="KARI_C"/>
    <property type="match status" value="1"/>
</dbReference>
<dbReference type="Pfam" id="PF07991">
    <property type="entry name" value="KARI_N"/>
    <property type="match status" value="1"/>
</dbReference>
<dbReference type="PIRSF" id="PIRSF000116">
    <property type="entry name" value="IlvC_gammaproteo"/>
    <property type="match status" value="1"/>
</dbReference>
<dbReference type="SMART" id="SM00997">
    <property type="entry name" value="AdoHcyase_NAD"/>
    <property type="match status" value="1"/>
</dbReference>
<dbReference type="SUPFAM" id="SSF48179">
    <property type="entry name" value="6-phosphogluconate dehydrogenase C-terminal domain-like"/>
    <property type="match status" value="1"/>
</dbReference>
<dbReference type="SUPFAM" id="SSF51735">
    <property type="entry name" value="NAD(P)-binding Rossmann-fold domains"/>
    <property type="match status" value="1"/>
</dbReference>
<dbReference type="PROSITE" id="PS51851">
    <property type="entry name" value="KARI_C"/>
    <property type="match status" value="1"/>
</dbReference>
<dbReference type="PROSITE" id="PS51850">
    <property type="entry name" value="KARI_N"/>
    <property type="match status" value="1"/>
</dbReference>
<evidence type="ECO:0000255" key="1">
    <source>
        <dbReference type="HAMAP-Rule" id="MF_00435"/>
    </source>
</evidence>
<evidence type="ECO:0000255" key="2">
    <source>
        <dbReference type="PROSITE-ProRule" id="PRU01197"/>
    </source>
</evidence>
<evidence type="ECO:0000255" key="3">
    <source>
        <dbReference type="PROSITE-ProRule" id="PRU01198"/>
    </source>
</evidence>
<sequence length="339" mass="37152">MRVYYDRDADLNLIKGKKVVIVGYGSQGHAHALNLRDSGVKDIVVALRPGSASAKKAEGEGFKVMTPAEAAKWGDVVMMLTPDELQADIYRESLHDNMKQGAALLFAHGLNVHFNLIEPRKDLDVLMIAPKGPGHTVRSEYQRGGGVPTLIAIAQDASGNAHDLGLSYASANGGGRAGIIETTFKEECETDLFGEQVVLCGGLVELIRAGFETLVEAGYAPEMAYFECLHEVKLIVDLIYEGGIANMNYSISNTAEYGEYVTGPRIITPETKAEMKRVLTDIQTGKFTRDWMLENKVNQASFKATRARHNAHQIEAVGEKLREMMPWIKAKALVDKSKN</sequence>
<feature type="chain" id="PRO_1000072319" description="Ketol-acid reductoisomerase (NADP(+))">
    <location>
        <begin position="1"/>
        <end position="339"/>
    </location>
</feature>
<feature type="domain" description="KARI N-terminal Rossmann" evidence="2">
    <location>
        <begin position="1"/>
        <end position="182"/>
    </location>
</feature>
<feature type="domain" description="KARI C-terminal knotted" evidence="3">
    <location>
        <begin position="183"/>
        <end position="328"/>
    </location>
</feature>
<feature type="active site" evidence="1">
    <location>
        <position position="108"/>
    </location>
</feature>
<feature type="binding site" evidence="1">
    <location>
        <begin position="24"/>
        <end position="27"/>
    </location>
    <ligand>
        <name>NADP(+)</name>
        <dbReference type="ChEBI" id="CHEBI:58349"/>
    </ligand>
</feature>
<feature type="binding site" evidence="1">
    <location>
        <position position="48"/>
    </location>
    <ligand>
        <name>NADP(+)</name>
        <dbReference type="ChEBI" id="CHEBI:58349"/>
    </ligand>
</feature>
<feature type="binding site" evidence="1">
    <location>
        <position position="51"/>
    </location>
    <ligand>
        <name>NADP(+)</name>
        <dbReference type="ChEBI" id="CHEBI:58349"/>
    </ligand>
</feature>
<feature type="binding site" evidence="1">
    <location>
        <position position="53"/>
    </location>
    <ligand>
        <name>NADP(+)</name>
        <dbReference type="ChEBI" id="CHEBI:58349"/>
    </ligand>
</feature>
<feature type="binding site" evidence="1">
    <location>
        <begin position="83"/>
        <end position="86"/>
    </location>
    <ligand>
        <name>NADP(+)</name>
        <dbReference type="ChEBI" id="CHEBI:58349"/>
    </ligand>
</feature>
<feature type="binding site" evidence="1">
    <location>
        <position position="134"/>
    </location>
    <ligand>
        <name>NADP(+)</name>
        <dbReference type="ChEBI" id="CHEBI:58349"/>
    </ligand>
</feature>
<feature type="binding site" evidence="1">
    <location>
        <position position="191"/>
    </location>
    <ligand>
        <name>Mg(2+)</name>
        <dbReference type="ChEBI" id="CHEBI:18420"/>
        <label>1</label>
    </ligand>
</feature>
<feature type="binding site" evidence="1">
    <location>
        <position position="191"/>
    </location>
    <ligand>
        <name>Mg(2+)</name>
        <dbReference type="ChEBI" id="CHEBI:18420"/>
        <label>2</label>
    </ligand>
</feature>
<feature type="binding site" evidence="1">
    <location>
        <position position="195"/>
    </location>
    <ligand>
        <name>Mg(2+)</name>
        <dbReference type="ChEBI" id="CHEBI:18420"/>
        <label>1</label>
    </ligand>
</feature>
<feature type="binding site" evidence="1">
    <location>
        <position position="227"/>
    </location>
    <ligand>
        <name>Mg(2+)</name>
        <dbReference type="ChEBI" id="CHEBI:18420"/>
        <label>2</label>
    </ligand>
</feature>
<feature type="binding site" evidence="1">
    <location>
        <position position="231"/>
    </location>
    <ligand>
        <name>Mg(2+)</name>
        <dbReference type="ChEBI" id="CHEBI:18420"/>
        <label>2</label>
    </ligand>
</feature>
<feature type="binding site" evidence="1">
    <location>
        <position position="252"/>
    </location>
    <ligand>
        <name>substrate</name>
    </ligand>
</feature>
<proteinExistence type="inferred from homology"/>
<comment type="function">
    <text evidence="1">Involved in the biosynthesis of branched-chain amino acids (BCAA). Catalyzes an alkyl-migration followed by a ketol-acid reduction of (S)-2-acetolactate (S2AL) to yield (R)-2,3-dihydroxy-isovalerate. In the isomerase reaction, S2AL is rearranged via a Mg-dependent methyl migration to produce 3-hydroxy-3-methyl-2-ketobutyrate (HMKB). In the reductase reaction, this 2-ketoacid undergoes a metal-dependent reduction by NADPH to yield (R)-2,3-dihydroxy-isovalerate.</text>
</comment>
<comment type="catalytic activity">
    <reaction evidence="1">
        <text>(2R)-2,3-dihydroxy-3-methylbutanoate + NADP(+) = (2S)-2-acetolactate + NADPH + H(+)</text>
        <dbReference type="Rhea" id="RHEA:22068"/>
        <dbReference type="ChEBI" id="CHEBI:15378"/>
        <dbReference type="ChEBI" id="CHEBI:49072"/>
        <dbReference type="ChEBI" id="CHEBI:57783"/>
        <dbReference type="ChEBI" id="CHEBI:58349"/>
        <dbReference type="ChEBI" id="CHEBI:58476"/>
        <dbReference type="EC" id="1.1.1.86"/>
    </reaction>
</comment>
<comment type="catalytic activity">
    <reaction evidence="1">
        <text>(2R,3R)-2,3-dihydroxy-3-methylpentanoate + NADP(+) = (S)-2-ethyl-2-hydroxy-3-oxobutanoate + NADPH + H(+)</text>
        <dbReference type="Rhea" id="RHEA:13493"/>
        <dbReference type="ChEBI" id="CHEBI:15378"/>
        <dbReference type="ChEBI" id="CHEBI:49256"/>
        <dbReference type="ChEBI" id="CHEBI:49258"/>
        <dbReference type="ChEBI" id="CHEBI:57783"/>
        <dbReference type="ChEBI" id="CHEBI:58349"/>
        <dbReference type="EC" id="1.1.1.86"/>
    </reaction>
</comment>
<comment type="cofactor">
    <cofactor evidence="1">
        <name>Mg(2+)</name>
        <dbReference type="ChEBI" id="CHEBI:18420"/>
    </cofactor>
    <text evidence="1">Binds 2 magnesium ions per subunit.</text>
</comment>
<comment type="pathway">
    <text evidence="1">Amino-acid biosynthesis; L-isoleucine biosynthesis; L-isoleucine from 2-oxobutanoate: step 2/4.</text>
</comment>
<comment type="pathway">
    <text evidence="1">Amino-acid biosynthesis; L-valine biosynthesis; L-valine from pyruvate: step 2/4.</text>
</comment>
<comment type="similarity">
    <text evidence="1">Belongs to the ketol-acid reductoisomerase family.</text>
</comment>
<reference key="1">
    <citation type="submission" date="2007-04" db="EMBL/GenBank/DDBJ databases">
        <title>Complete genome sequence of the nitrogen-fixing bacterium Azorhizobium caulinodans ORS571.</title>
        <authorList>
            <person name="Lee K.B."/>
            <person name="Backer P.D."/>
            <person name="Aono T."/>
            <person name="Liu C.T."/>
            <person name="Suzuki S."/>
            <person name="Suzuki T."/>
            <person name="Kaneko T."/>
            <person name="Yamada M."/>
            <person name="Tabata S."/>
            <person name="Kupfer D.M."/>
            <person name="Najar F.Z."/>
            <person name="Wiley G.B."/>
            <person name="Roe B."/>
            <person name="Binnewies T."/>
            <person name="Ussery D."/>
            <person name="Vereecke D."/>
            <person name="Gevers D."/>
            <person name="Holsters M."/>
            <person name="Oyaizu H."/>
        </authorList>
    </citation>
    <scope>NUCLEOTIDE SEQUENCE [LARGE SCALE GENOMIC DNA]</scope>
    <source>
        <strain>ATCC 43989 / DSM 5975 / JCM 20966 / LMG 6465 / NBRC 14845 / NCIMB 13405 / ORS 571</strain>
    </source>
</reference>
<protein>
    <recommendedName>
        <fullName evidence="1">Ketol-acid reductoisomerase (NADP(+))</fullName>
        <shortName evidence="1">KARI</shortName>
        <ecNumber evidence="1">1.1.1.86</ecNumber>
    </recommendedName>
    <alternativeName>
        <fullName evidence="1">Acetohydroxy-acid isomeroreductase</fullName>
        <shortName evidence="1">AHIR</shortName>
    </alternativeName>
    <alternativeName>
        <fullName evidence="1">Alpha-keto-beta-hydroxylacyl reductoisomerase</fullName>
    </alternativeName>
    <alternativeName>
        <fullName evidence="1">Ketol-acid reductoisomerase type 1</fullName>
    </alternativeName>
    <alternativeName>
        <fullName evidence="1">Ketol-acid reductoisomerase type I</fullName>
    </alternativeName>
</protein>
<gene>
    <name evidence="1" type="primary">ilvC</name>
    <name type="ordered locus">AZC_2374</name>
</gene>